<protein>
    <recommendedName>
        <fullName evidence="1">Undecaprenyl-diphosphatase</fullName>
        <ecNumber evidence="1">3.6.1.27</ecNumber>
    </recommendedName>
    <alternativeName>
        <fullName evidence="1">Bacitracin resistance protein</fullName>
    </alternativeName>
    <alternativeName>
        <fullName evidence="1">Undecaprenyl pyrophosphate phosphatase</fullName>
    </alternativeName>
</protein>
<comment type="function">
    <text evidence="1">Catalyzes the dephosphorylation of undecaprenyl diphosphate (UPP). Confers resistance to bacitracin.</text>
</comment>
<comment type="catalytic activity">
    <reaction evidence="1">
        <text>di-trans,octa-cis-undecaprenyl diphosphate + H2O = di-trans,octa-cis-undecaprenyl phosphate + phosphate + H(+)</text>
        <dbReference type="Rhea" id="RHEA:28094"/>
        <dbReference type="ChEBI" id="CHEBI:15377"/>
        <dbReference type="ChEBI" id="CHEBI:15378"/>
        <dbReference type="ChEBI" id="CHEBI:43474"/>
        <dbReference type="ChEBI" id="CHEBI:58405"/>
        <dbReference type="ChEBI" id="CHEBI:60392"/>
        <dbReference type="EC" id="3.6.1.27"/>
    </reaction>
</comment>
<comment type="subcellular location">
    <subcellularLocation>
        <location evidence="1">Cell inner membrane</location>
        <topology evidence="1">Multi-pass membrane protein</topology>
    </subcellularLocation>
</comment>
<comment type="miscellaneous">
    <text>Bacitracin is thought to be involved in the inhibition of peptidoglycan synthesis by sequestering undecaprenyl diphosphate, thereby reducing the pool of lipid carrier available.</text>
</comment>
<comment type="similarity">
    <text evidence="1">Belongs to the UppP family.</text>
</comment>
<feature type="chain" id="PRO_0000227623" description="Undecaprenyl-diphosphatase">
    <location>
        <begin position="1"/>
        <end position="256"/>
    </location>
</feature>
<feature type="transmembrane region" description="Helical" evidence="1">
    <location>
        <begin position="5"/>
        <end position="25"/>
    </location>
</feature>
<feature type="transmembrane region" description="Helical" evidence="1">
    <location>
        <begin position="41"/>
        <end position="61"/>
    </location>
</feature>
<feature type="transmembrane region" description="Helical" evidence="1">
    <location>
        <begin position="74"/>
        <end position="94"/>
    </location>
</feature>
<feature type="transmembrane region" description="Helical" evidence="1">
    <location>
        <begin position="100"/>
        <end position="120"/>
    </location>
</feature>
<feature type="transmembrane region" description="Helical" evidence="1">
    <location>
        <begin position="135"/>
        <end position="155"/>
    </location>
</feature>
<feature type="transmembrane region" description="Helical" evidence="1">
    <location>
        <begin position="180"/>
        <end position="200"/>
    </location>
</feature>
<feature type="transmembrane region" description="Helical" evidence="1">
    <location>
        <begin position="208"/>
        <end position="228"/>
    </location>
</feature>
<feature type="transmembrane region" description="Helical" evidence="1">
    <location>
        <begin position="234"/>
        <end position="254"/>
    </location>
</feature>
<dbReference type="EC" id="3.6.1.27" evidence="1"/>
<dbReference type="EMBL" id="CP000084">
    <property type="protein sequence ID" value="AAZ21254.1"/>
    <property type="molecule type" value="Genomic_DNA"/>
</dbReference>
<dbReference type="RefSeq" id="WP_011281705.1">
    <property type="nucleotide sequence ID" value="NC_007205.1"/>
</dbReference>
<dbReference type="SMR" id="Q4FNI5"/>
<dbReference type="STRING" id="335992.SAR11_0432"/>
<dbReference type="GeneID" id="66294931"/>
<dbReference type="KEGG" id="pub:SAR11_0432"/>
<dbReference type="eggNOG" id="COG1968">
    <property type="taxonomic scope" value="Bacteria"/>
</dbReference>
<dbReference type="HOGENOM" id="CLU_060296_1_0_5"/>
<dbReference type="OrthoDB" id="9808289at2"/>
<dbReference type="Proteomes" id="UP000002528">
    <property type="component" value="Chromosome"/>
</dbReference>
<dbReference type="GO" id="GO:0005886">
    <property type="term" value="C:plasma membrane"/>
    <property type="evidence" value="ECO:0007669"/>
    <property type="project" value="UniProtKB-SubCell"/>
</dbReference>
<dbReference type="GO" id="GO:0050380">
    <property type="term" value="F:undecaprenyl-diphosphatase activity"/>
    <property type="evidence" value="ECO:0007669"/>
    <property type="project" value="UniProtKB-UniRule"/>
</dbReference>
<dbReference type="GO" id="GO:0071555">
    <property type="term" value="P:cell wall organization"/>
    <property type="evidence" value="ECO:0007669"/>
    <property type="project" value="UniProtKB-KW"/>
</dbReference>
<dbReference type="GO" id="GO:0009252">
    <property type="term" value="P:peptidoglycan biosynthetic process"/>
    <property type="evidence" value="ECO:0007669"/>
    <property type="project" value="UniProtKB-KW"/>
</dbReference>
<dbReference type="GO" id="GO:0008360">
    <property type="term" value="P:regulation of cell shape"/>
    <property type="evidence" value="ECO:0007669"/>
    <property type="project" value="UniProtKB-KW"/>
</dbReference>
<dbReference type="GO" id="GO:0046677">
    <property type="term" value="P:response to antibiotic"/>
    <property type="evidence" value="ECO:0007669"/>
    <property type="project" value="UniProtKB-UniRule"/>
</dbReference>
<dbReference type="HAMAP" id="MF_01006">
    <property type="entry name" value="Undec_diphosphatase"/>
    <property type="match status" value="1"/>
</dbReference>
<dbReference type="InterPro" id="IPR003824">
    <property type="entry name" value="UppP"/>
</dbReference>
<dbReference type="PANTHER" id="PTHR30622">
    <property type="entry name" value="UNDECAPRENYL-DIPHOSPHATASE"/>
    <property type="match status" value="1"/>
</dbReference>
<dbReference type="PANTHER" id="PTHR30622:SF4">
    <property type="entry name" value="UNDECAPRENYL-DIPHOSPHATASE"/>
    <property type="match status" value="1"/>
</dbReference>
<dbReference type="Pfam" id="PF02673">
    <property type="entry name" value="BacA"/>
    <property type="match status" value="1"/>
</dbReference>
<evidence type="ECO:0000255" key="1">
    <source>
        <dbReference type="HAMAP-Rule" id="MF_01006"/>
    </source>
</evidence>
<sequence length="256" mass="28820">MFSNIIEIIILSIVQGISEFLPISSSAHLNIVEIIFEFNSNSLMIDVSLHLGSLLAIVFYFRRELLDLRNNQKLLSLLIIGSIPIVIAGYVISSTGLVNLLENNLKIIAWTTLIFGIILYLADKSKFDKKISSNLNFKTILYIGLFQILALIPGVSRAGITITAARLFRFNRFDSSKISFLLAIPAIAGASVLQLKNAIGQSFELNYLVLISITLSFLFSYFTVKFFLDYINKFSLNVFVIYRIIISIILFIIIYN</sequence>
<reference key="1">
    <citation type="journal article" date="2005" name="Science">
        <title>Genome streamlining in a cosmopolitan oceanic bacterium.</title>
        <authorList>
            <person name="Giovannoni S.J."/>
            <person name="Tripp H.J."/>
            <person name="Givan S."/>
            <person name="Podar M."/>
            <person name="Vergin K.L."/>
            <person name="Baptista D."/>
            <person name="Bibbs L."/>
            <person name="Eads J."/>
            <person name="Richardson T.H."/>
            <person name="Noordewier M."/>
            <person name="Rappe M.S."/>
            <person name="Short J.M."/>
            <person name="Carrington J.C."/>
            <person name="Mathur E.J."/>
        </authorList>
    </citation>
    <scope>NUCLEOTIDE SEQUENCE [LARGE SCALE GENOMIC DNA]</scope>
    <source>
        <strain>HTCC1062</strain>
    </source>
</reference>
<accession>Q4FNI5</accession>
<keyword id="KW-0046">Antibiotic resistance</keyword>
<keyword id="KW-0997">Cell inner membrane</keyword>
<keyword id="KW-1003">Cell membrane</keyword>
<keyword id="KW-0133">Cell shape</keyword>
<keyword id="KW-0961">Cell wall biogenesis/degradation</keyword>
<keyword id="KW-0378">Hydrolase</keyword>
<keyword id="KW-0472">Membrane</keyword>
<keyword id="KW-0573">Peptidoglycan synthesis</keyword>
<keyword id="KW-1185">Reference proteome</keyword>
<keyword id="KW-0812">Transmembrane</keyword>
<keyword id="KW-1133">Transmembrane helix</keyword>
<name>UPPP_PELUB</name>
<organism>
    <name type="scientific">Pelagibacter ubique (strain HTCC1062)</name>
    <dbReference type="NCBI Taxonomy" id="335992"/>
    <lineage>
        <taxon>Bacteria</taxon>
        <taxon>Pseudomonadati</taxon>
        <taxon>Pseudomonadota</taxon>
        <taxon>Alphaproteobacteria</taxon>
        <taxon>Candidatus Pelagibacterales</taxon>
        <taxon>Candidatus Pelagibacteraceae</taxon>
        <taxon>Candidatus Pelagibacter</taxon>
    </lineage>
</organism>
<proteinExistence type="inferred from homology"/>
<gene>
    <name evidence="1" type="primary">uppP</name>
    <name type="synonym">bacA</name>
    <name type="ordered locus">SAR11_0432</name>
</gene>